<reference key="1">
    <citation type="journal article" date="2012" name="PLoS ONE">
        <title>Evaluation of an antimicrobial L-amino acid oxidase and peptide derivatives from Bothropoides mattogrosensis pitviper venom.</title>
        <authorList>
            <person name="Okubo B.M."/>
            <person name="Silva O.N."/>
            <person name="Migliolo L."/>
            <person name="Gomes D.G."/>
            <person name="Porto W.F."/>
            <person name="Batista C.L."/>
            <person name="Ramos C.S."/>
            <person name="Holanda H.H."/>
            <person name="Dias S.C."/>
            <person name="Franco O.L."/>
            <person name="Moreno S.E."/>
        </authorList>
    </citation>
    <scope>PROTEIN SEQUENCE</scope>
    <scope>FUNCTION</scope>
    <scope>CATALYTIC ACTIVITY</scope>
    <scope>SUBCELLULAR LOCATION</scope>
    <scope>SUBSTRATE SPECIFICITY</scope>
    <source>
        <tissue>Venom</tissue>
    </source>
</reference>
<sequence length="31" mass="3751">IKFEPPLPPKKAHKKFWEDDGIYYPPNHNFP</sequence>
<keyword id="KW-0044">Antibiotic</keyword>
<keyword id="KW-0929">Antimicrobial</keyword>
<keyword id="KW-0053">Apoptosis</keyword>
<keyword id="KW-0204">Cytolysis</keyword>
<keyword id="KW-0903">Direct protein sequencing</keyword>
<keyword id="KW-0274">FAD</keyword>
<keyword id="KW-0285">Flavoprotein</keyword>
<keyword id="KW-0354">Hemolysis</keyword>
<keyword id="KW-1199">Hemostasis impairing toxin</keyword>
<keyword id="KW-0560">Oxidoreductase</keyword>
<keyword id="KW-0964">Secreted</keyword>
<keyword id="KW-0800">Toxin</keyword>
<evidence type="ECO:0000250" key="1">
    <source>
        <dbReference type="UniProtKB" id="P0CC17"/>
    </source>
</evidence>
<evidence type="ECO:0000250" key="2">
    <source>
        <dbReference type="UniProtKB" id="P81382"/>
    </source>
</evidence>
<evidence type="ECO:0000255" key="3"/>
<evidence type="ECO:0000269" key="4">
    <source>
    </source>
</evidence>
<evidence type="ECO:0000303" key="5">
    <source>
    </source>
</evidence>
<evidence type="ECO:0000305" key="6">
    <source>
    </source>
</evidence>
<accession>B3EWI9</accession>
<organism>
    <name type="scientific">Bothrops mattogrossensis</name>
    <name type="common">Pitviper</name>
    <name type="synonym">Bothrops neuwiedi mattogrossensis</name>
    <dbReference type="NCBI Taxonomy" id="1171125"/>
    <lineage>
        <taxon>Eukaryota</taxon>
        <taxon>Metazoa</taxon>
        <taxon>Chordata</taxon>
        <taxon>Craniata</taxon>
        <taxon>Vertebrata</taxon>
        <taxon>Euteleostomi</taxon>
        <taxon>Lepidosauria</taxon>
        <taxon>Squamata</taxon>
        <taxon>Bifurcata</taxon>
        <taxon>Unidentata</taxon>
        <taxon>Episquamata</taxon>
        <taxon>Toxicofera</taxon>
        <taxon>Serpentes</taxon>
        <taxon>Colubroidea</taxon>
        <taxon>Viperidae</taxon>
        <taxon>Crotalinae</taxon>
        <taxon>Bothrops</taxon>
    </lineage>
</organism>
<feature type="chain" id="PRO_0000417918" description="L-amino-acid oxidase">
    <location>
        <begin position="1" status="less than"/>
        <end position="31" status="greater than"/>
    </location>
</feature>
<feature type="non-consecutive residues" evidence="5">
    <location>
        <begin position="13"/>
        <end position="14"/>
    </location>
</feature>
<feature type="non-consecutive residues" evidence="5">
    <location>
        <begin position="21"/>
        <end position="22"/>
    </location>
</feature>
<feature type="non-terminal residue" evidence="5">
    <location>
        <position position="1"/>
    </location>
</feature>
<feature type="non-terminal residue" evidence="5">
    <location>
        <position position="31"/>
    </location>
</feature>
<proteinExistence type="evidence at protein level"/>
<name>OXLA_BOTMT</name>
<comment type="function">
    <text evidence="1 4">Catalyzes an oxidative deamination of predominantly hydrophobic and aromatic L-amino acids, thus producing hydrogen peroxide that may contribute to the diverse toxic effects of this enzyme (PubMed:22438972). Is moderately active on L-Leu, L-His, and L-Phe, and very weakly active on L-Thr, and L-Cys (PubMed:22438972). Exhibits diverse biological activities, such as hemorrhage, hemolysis, edema, antibacterial and antiparasitic activities, as well as regulation of platelet aggregation. Its effect on platelets is controversial, since it either induces aggregation or inhibits agonist-induced aggregation. These different effects are probably due to different experimental conditions (By similarity). Inhibits growth of B.subtilis strain ATCC 6633 (MIC=32 uM), E.faecalis strain ATCC 12953 (MIC=32 uM), S.aureus strain ATCC 29213 (MIC=32 uM), S.pyogenes strain ATCC 19615 (MIC=8 uM), E.coli strain ATCC 8739 (MIC=4 uM), K.pneumoniae strain ATCC 13885 (MIC=2 uM), P.mirabilis strain ATCC 25933 (MIC=2 uM), P.aeruginosa strain ATCC 15442 (MIC=8 uM) and S.typhimurium strain ATCC 14028 (MIC=8 uM) (PubMed:22438972).</text>
</comment>
<comment type="catalytic activity">
    <reaction evidence="4">
        <text>an L-alpha-amino acid + O2 + H2O = a 2-oxocarboxylate + H2O2 + NH4(+)</text>
        <dbReference type="Rhea" id="RHEA:13781"/>
        <dbReference type="ChEBI" id="CHEBI:15377"/>
        <dbReference type="ChEBI" id="CHEBI:15379"/>
        <dbReference type="ChEBI" id="CHEBI:16240"/>
        <dbReference type="ChEBI" id="CHEBI:28938"/>
        <dbReference type="ChEBI" id="CHEBI:35179"/>
        <dbReference type="ChEBI" id="CHEBI:59869"/>
        <dbReference type="EC" id="1.4.3.2"/>
    </reaction>
</comment>
<comment type="catalytic activity">
    <reaction evidence="4">
        <text>L-leucine + O2 + H2O = 4-methyl-2-oxopentanoate + H2O2 + NH4(+)</text>
        <dbReference type="Rhea" id="RHEA:60996"/>
        <dbReference type="ChEBI" id="CHEBI:15377"/>
        <dbReference type="ChEBI" id="CHEBI:15379"/>
        <dbReference type="ChEBI" id="CHEBI:16240"/>
        <dbReference type="ChEBI" id="CHEBI:17865"/>
        <dbReference type="ChEBI" id="CHEBI:28938"/>
        <dbReference type="ChEBI" id="CHEBI:57427"/>
    </reaction>
</comment>
<comment type="catalytic activity">
    <reaction evidence="4">
        <text>L-phenylalanine + O2 + H2O = 3-phenylpyruvate + H2O2 + NH4(+)</text>
        <dbReference type="Rhea" id="RHEA:61240"/>
        <dbReference type="ChEBI" id="CHEBI:15377"/>
        <dbReference type="ChEBI" id="CHEBI:15379"/>
        <dbReference type="ChEBI" id="CHEBI:16240"/>
        <dbReference type="ChEBI" id="CHEBI:18005"/>
        <dbReference type="ChEBI" id="CHEBI:28938"/>
        <dbReference type="ChEBI" id="CHEBI:58095"/>
    </reaction>
</comment>
<comment type="catalytic activity">
    <reaction evidence="4">
        <text>L-histidine + O2 + H2O = 3-(imidazol-5-yl)pyruvate + H2O2 + NH4(+)</text>
        <dbReference type="Rhea" id="RHEA:61228"/>
        <dbReference type="ChEBI" id="CHEBI:15377"/>
        <dbReference type="ChEBI" id="CHEBI:15379"/>
        <dbReference type="ChEBI" id="CHEBI:16240"/>
        <dbReference type="ChEBI" id="CHEBI:28938"/>
        <dbReference type="ChEBI" id="CHEBI:57595"/>
        <dbReference type="ChEBI" id="CHEBI:58133"/>
    </reaction>
</comment>
<comment type="cofactor">
    <cofactor evidence="2">
        <name>FAD</name>
        <dbReference type="ChEBI" id="CHEBI:57692"/>
    </cofactor>
</comment>
<comment type="subunit">
    <text evidence="2">Homodimer; non-covalently linked.</text>
</comment>
<comment type="subcellular location">
    <subcellularLocation>
        <location evidence="4">Secreted</location>
    </subcellularLocation>
</comment>
<comment type="tissue specificity">
    <text evidence="6">Expressed by the venom gland.</text>
</comment>
<comment type="PTM">
    <text evidence="2">N-glycosylated.</text>
</comment>
<comment type="similarity">
    <text evidence="3">Belongs to the flavin monoamine oxidase family. FIG1 subfamily.</text>
</comment>
<dbReference type="EC" id="1.4.3.2" evidence="4"/>
<dbReference type="SMR" id="B3EWI9"/>
<dbReference type="GO" id="GO:0005576">
    <property type="term" value="C:extracellular region"/>
    <property type="evidence" value="ECO:0007669"/>
    <property type="project" value="UniProtKB-SubCell"/>
</dbReference>
<dbReference type="GO" id="GO:0106329">
    <property type="term" value="F:L-phenylalaine oxidase activity"/>
    <property type="evidence" value="ECO:0007669"/>
    <property type="project" value="RHEA"/>
</dbReference>
<dbReference type="GO" id="GO:0090729">
    <property type="term" value="F:toxin activity"/>
    <property type="evidence" value="ECO:0007669"/>
    <property type="project" value="UniProtKB-KW"/>
</dbReference>
<dbReference type="GO" id="GO:0006915">
    <property type="term" value="P:apoptotic process"/>
    <property type="evidence" value="ECO:0007669"/>
    <property type="project" value="UniProtKB-KW"/>
</dbReference>
<dbReference type="GO" id="GO:0042742">
    <property type="term" value="P:defense response to bacterium"/>
    <property type="evidence" value="ECO:0007669"/>
    <property type="project" value="UniProtKB-KW"/>
</dbReference>
<dbReference type="GO" id="GO:0031640">
    <property type="term" value="P:killing of cells of another organism"/>
    <property type="evidence" value="ECO:0007669"/>
    <property type="project" value="UniProtKB-KW"/>
</dbReference>
<protein>
    <recommendedName>
        <fullName evidence="5">L-amino-acid oxidase</fullName>
        <shortName evidence="5">Bm-LAO</shortName>
        <shortName evidence="2">LAAO</shortName>
        <ecNumber evidence="4">1.4.3.2</ecNumber>
    </recommendedName>
</protein>